<reference key="1">
    <citation type="journal article" date="1996" name="Gene">
        <title>Molecular characterization of the pigeon P-opsin gene.</title>
        <authorList>
            <person name="Kawamura S."/>
            <person name="Yokoyama S."/>
        </authorList>
    </citation>
    <scope>NUCLEOTIDE SEQUENCE [GENOMIC DNA]</scope>
    <source>
        <tissue>Pineal gland</tissue>
    </source>
</reference>
<protein>
    <recommendedName>
        <fullName>Pinopsin</fullName>
    </recommendedName>
    <alternativeName>
        <fullName>Pineal gland-specific opsin</fullName>
        <shortName>P-opsin</shortName>
        <shortName>Pineal opsin</shortName>
    </alternativeName>
</protein>
<accession>P51476</accession>
<keyword id="KW-0157">Chromophore</keyword>
<keyword id="KW-1015">Disulfide bond</keyword>
<keyword id="KW-0297">G-protein coupled receptor</keyword>
<keyword id="KW-0325">Glycoprotein</keyword>
<keyword id="KW-0449">Lipoprotein</keyword>
<keyword id="KW-0472">Membrane</keyword>
<keyword id="KW-0564">Palmitate</keyword>
<keyword id="KW-0597">Phosphoprotein</keyword>
<keyword id="KW-0600">Photoreceptor protein</keyword>
<keyword id="KW-0675">Receptor</keyword>
<keyword id="KW-0681">Retinal protein</keyword>
<keyword id="KW-0716">Sensory transduction</keyword>
<keyword id="KW-0807">Transducer</keyword>
<keyword id="KW-0812">Transmembrane</keyword>
<keyword id="KW-1133">Transmembrane helix</keyword>
<evidence type="ECO:0000250" key="1"/>
<evidence type="ECO:0000255" key="2"/>
<evidence type="ECO:0000255" key="3">
    <source>
        <dbReference type="PROSITE-ProRule" id="PRU00521"/>
    </source>
</evidence>
<evidence type="ECO:0000256" key="4">
    <source>
        <dbReference type="SAM" id="MobiDB-lite"/>
    </source>
</evidence>
<comment type="function">
    <text>Produces a slow and prolonged phototransduction response consistent with the non-visual function of pineal photoreception.</text>
</comment>
<comment type="subcellular location">
    <subcellularLocation>
        <location>Membrane</location>
        <topology>Multi-pass membrane protein</topology>
    </subcellularLocation>
</comment>
<comment type="tissue specificity">
    <text>Pineal gland.</text>
</comment>
<comment type="PTM">
    <text evidence="1">Phosphorylated on some or all of the serine and threonine residues present in the C-terminal region.</text>
</comment>
<comment type="similarity">
    <text evidence="3">Belongs to the G-protein coupled receptor 1 family. Opsin subfamily.</text>
</comment>
<feature type="chain" id="PRO_0000197808" description="Pinopsin">
    <location>
        <begin position="1"/>
        <end position="349"/>
    </location>
</feature>
<feature type="topological domain" description="Extracellular">
    <location>
        <begin position="1"/>
        <end position="32"/>
    </location>
</feature>
<feature type="transmembrane region" description="Helical; Name=1" evidence="2">
    <location>
        <begin position="33"/>
        <end position="57"/>
    </location>
</feature>
<feature type="topological domain" description="Cytoplasmic">
    <location>
        <begin position="58"/>
        <end position="69"/>
    </location>
</feature>
<feature type="transmembrane region" description="Helical; Name=2" evidence="2">
    <location>
        <begin position="70"/>
        <end position="94"/>
    </location>
</feature>
<feature type="topological domain" description="Extracellular">
    <location>
        <begin position="95"/>
        <end position="109"/>
    </location>
</feature>
<feature type="transmembrane region" description="Helical; Name=3" evidence="2">
    <location>
        <begin position="110"/>
        <end position="129"/>
    </location>
</feature>
<feature type="topological domain" description="Cytoplasmic">
    <location>
        <begin position="130"/>
        <end position="148"/>
    </location>
</feature>
<feature type="transmembrane region" description="Helical; Name=4" evidence="2">
    <location>
        <begin position="149"/>
        <end position="172"/>
    </location>
</feature>
<feature type="topological domain" description="Extracellular">
    <location>
        <begin position="173"/>
        <end position="196"/>
    </location>
</feature>
<feature type="transmembrane region" description="Helical; Name=5" evidence="2">
    <location>
        <begin position="197"/>
        <end position="224"/>
    </location>
</feature>
<feature type="topological domain" description="Cytoplasmic">
    <location>
        <begin position="225"/>
        <end position="246"/>
    </location>
</feature>
<feature type="transmembrane region" description="Helical; Name=6" evidence="2">
    <location>
        <begin position="247"/>
        <end position="270"/>
    </location>
</feature>
<feature type="topological domain" description="Extracellular">
    <location>
        <begin position="271"/>
        <end position="278"/>
    </location>
</feature>
<feature type="transmembrane region" description="Helical; Name=7" evidence="2">
    <location>
        <begin position="279"/>
        <end position="303"/>
    </location>
</feature>
<feature type="topological domain" description="Cytoplasmic">
    <location>
        <begin position="304"/>
        <end position="349"/>
    </location>
</feature>
<feature type="region of interest" description="Disordered" evidence="4">
    <location>
        <begin position="1"/>
        <end position="22"/>
    </location>
</feature>
<feature type="region of interest" description="Disordered" evidence="4">
    <location>
        <begin position="325"/>
        <end position="349"/>
    </location>
</feature>
<feature type="compositionally biased region" description="Polar residues" evidence="4">
    <location>
        <begin position="1"/>
        <end position="16"/>
    </location>
</feature>
<feature type="modified residue" description="N6-(retinylidene)lysine">
    <location>
        <position position="290"/>
    </location>
</feature>
<feature type="lipid moiety-binding region" description="S-palmitoyl cysteine" evidence="1">
    <location>
        <position position="316"/>
    </location>
</feature>
<feature type="lipid moiety-binding region" description="S-palmitoyl cysteine" evidence="1">
    <location>
        <position position="317"/>
    </location>
</feature>
<feature type="glycosylation site" description="N-linked (GlcNAc...) asparagine" evidence="2">
    <location>
        <position position="194"/>
    </location>
</feature>
<feature type="disulfide bond" evidence="3">
    <location>
        <begin position="106"/>
        <end position="183"/>
    </location>
</feature>
<organism>
    <name type="scientific">Columba livia</name>
    <name type="common">Rock dove</name>
    <dbReference type="NCBI Taxonomy" id="8932"/>
    <lineage>
        <taxon>Eukaryota</taxon>
        <taxon>Metazoa</taxon>
        <taxon>Chordata</taxon>
        <taxon>Craniata</taxon>
        <taxon>Vertebrata</taxon>
        <taxon>Euteleostomi</taxon>
        <taxon>Archelosauria</taxon>
        <taxon>Archosauria</taxon>
        <taxon>Dinosauria</taxon>
        <taxon>Saurischia</taxon>
        <taxon>Theropoda</taxon>
        <taxon>Coelurosauria</taxon>
        <taxon>Aves</taxon>
        <taxon>Neognathae</taxon>
        <taxon>Neoaves</taxon>
        <taxon>Columbimorphae</taxon>
        <taxon>Columbiformes</taxon>
        <taxon>Columbidae</taxon>
        <taxon>Columba</taxon>
    </lineage>
</organism>
<sequence length="349" mass="38364">MDPTNSPQEPPHTSTPGPFDGPQWPHQAPRGMYLSVAVLMGIVVISASVVNGLVIVVSIRYKKLRSPLNYILVNLAMADLLVTLCGSSVSFSNNINGFFVFGKRLCELEGFMVSLTGIVGLWSLAILALERYVVVCRPLGDFRFQHRHAVTGCAFTWVWSLLWTTPPLLGWSSYVPEGLRTSCGPNWYTGGSNNNSYILTLFVTCFVMPLSLILFSYANLLMTLRAAAAQQQESDTTQQAERQVTRMVVAMVMAFLICWLPYTTFALVVATNKDIAIQPALASLPSYFSKTATVYNPIIYVFMNKQFQSCLLKMLCCGHHPRGTGRTAPAAPASPTDGLRNKVTPSHPV</sequence>
<dbReference type="EMBL" id="U50598">
    <property type="protein sequence ID" value="AAB40945.1"/>
    <property type="molecule type" value="Genomic_DNA"/>
</dbReference>
<dbReference type="PIR" id="JC5490">
    <property type="entry name" value="JC5490"/>
</dbReference>
<dbReference type="SMR" id="P51476"/>
<dbReference type="eggNOG" id="KOG3656">
    <property type="taxonomic scope" value="Eukaryota"/>
</dbReference>
<dbReference type="GO" id="GO:0016020">
    <property type="term" value="C:membrane"/>
    <property type="evidence" value="ECO:0007669"/>
    <property type="project" value="UniProtKB-SubCell"/>
</dbReference>
<dbReference type="GO" id="GO:0004930">
    <property type="term" value="F:G protein-coupled receptor activity"/>
    <property type="evidence" value="ECO:0007669"/>
    <property type="project" value="UniProtKB-KW"/>
</dbReference>
<dbReference type="GO" id="GO:0009881">
    <property type="term" value="F:photoreceptor activity"/>
    <property type="evidence" value="ECO:0007669"/>
    <property type="project" value="UniProtKB-KW"/>
</dbReference>
<dbReference type="GO" id="GO:0016037">
    <property type="term" value="P:light absorption"/>
    <property type="evidence" value="ECO:0007669"/>
    <property type="project" value="UniProtKB-ARBA"/>
</dbReference>
<dbReference type="GO" id="GO:0007602">
    <property type="term" value="P:phototransduction"/>
    <property type="evidence" value="ECO:0007669"/>
    <property type="project" value="UniProtKB-KW"/>
</dbReference>
<dbReference type="GO" id="GO:0007601">
    <property type="term" value="P:visual perception"/>
    <property type="evidence" value="ECO:0007669"/>
    <property type="project" value="InterPro"/>
</dbReference>
<dbReference type="CDD" id="cd15084">
    <property type="entry name" value="7tmA_Pinopsin"/>
    <property type="match status" value="1"/>
</dbReference>
<dbReference type="FunFam" id="1.20.1070.10:FF:000018">
    <property type="entry name" value="Rhodopsin"/>
    <property type="match status" value="1"/>
</dbReference>
<dbReference type="Gene3D" id="1.20.1070.10">
    <property type="entry name" value="Rhodopsin 7-helix transmembrane proteins"/>
    <property type="match status" value="1"/>
</dbReference>
<dbReference type="InterPro" id="IPR050125">
    <property type="entry name" value="GPCR_opsins"/>
</dbReference>
<dbReference type="InterPro" id="IPR000276">
    <property type="entry name" value="GPCR_Rhodpsn"/>
</dbReference>
<dbReference type="InterPro" id="IPR017452">
    <property type="entry name" value="GPCR_Rhodpsn_7TM"/>
</dbReference>
<dbReference type="InterPro" id="IPR001760">
    <property type="entry name" value="Opsin"/>
</dbReference>
<dbReference type="InterPro" id="IPR002206">
    <property type="entry name" value="Opsin_pineal"/>
</dbReference>
<dbReference type="InterPro" id="IPR027430">
    <property type="entry name" value="Retinal_BS"/>
</dbReference>
<dbReference type="PANTHER" id="PTHR24240">
    <property type="entry name" value="OPSIN"/>
    <property type="match status" value="1"/>
</dbReference>
<dbReference type="Pfam" id="PF00001">
    <property type="entry name" value="7tm_1"/>
    <property type="match status" value="1"/>
</dbReference>
<dbReference type="PRINTS" id="PR00237">
    <property type="entry name" value="GPCRRHODOPSN"/>
</dbReference>
<dbReference type="PRINTS" id="PR00238">
    <property type="entry name" value="OPSIN"/>
</dbReference>
<dbReference type="PRINTS" id="PR00666">
    <property type="entry name" value="PINOPSIN"/>
</dbReference>
<dbReference type="SUPFAM" id="SSF81321">
    <property type="entry name" value="Family A G protein-coupled receptor-like"/>
    <property type="match status" value="1"/>
</dbReference>
<dbReference type="PROSITE" id="PS00237">
    <property type="entry name" value="G_PROTEIN_RECEP_F1_1"/>
    <property type="match status" value="1"/>
</dbReference>
<dbReference type="PROSITE" id="PS50262">
    <property type="entry name" value="G_PROTEIN_RECEP_F1_2"/>
    <property type="match status" value="1"/>
</dbReference>
<dbReference type="PROSITE" id="PS00238">
    <property type="entry name" value="OPSIN"/>
    <property type="match status" value="1"/>
</dbReference>
<proteinExistence type="evidence at protein level"/>
<name>OPSP_COLLI</name>